<gene>
    <name evidence="1" type="primary">rhaM</name>
    <name type="ordered locus">ESA_03852</name>
</gene>
<comment type="function">
    <text evidence="1">Involved in the anomeric conversion of L-rhamnose.</text>
</comment>
<comment type="catalytic activity">
    <reaction evidence="1">
        <text>alpha-L-rhamnose = beta-L-rhamnose</text>
        <dbReference type="Rhea" id="RHEA:25584"/>
        <dbReference type="ChEBI" id="CHEBI:27586"/>
        <dbReference type="ChEBI" id="CHEBI:27907"/>
        <dbReference type="EC" id="5.1.3.32"/>
    </reaction>
</comment>
<comment type="pathway">
    <text evidence="1">Carbohydrate metabolism; L-rhamnose metabolism.</text>
</comment>
<comment type="subunit">
    <text evidence="1">Homodimer.</text>
</comment>
<comment type="subcellular location">
    <subcellularLocation>
        <location evidence="1">Cytoplasm</location>
    </subcellularLocation>
</comment>
<comment type="similarity">
    <text evidence="1">Belongs to the rhamnose mutarotase family.</text>
</comment>
<sequence>MIRKAFVMQVNPDAHEEYQRRHSPIWPELEAVLKQHGAHHYAIWLDAQRHLLFATVEIESEARWNAVAQTEVCQRWWKHMREIMPSNPDNSPVSQELKNVFYLE</sequence>
<accession>A7ML65</accession>
<keyword id="KW-0119">Carbohydrate metabolism</keyword>
<keyword id="KW-0963">Cytoplasm</keyword>
<keyword id="KW-0413">Isomerase</keyword>
<keyword id="KW-1185">Reference proteome</keyword>
<keyword id="KW-0684">Rhamnose metabolism</keyword>
<name>RHAM_CROS8</name>
<reference key="1">
    <citation type="journal article" date="2010" name="PLoS ONE">
        <title>Genome sequence of Cronobacter sakazakii BAA-894 and comparative genomic hybridization analysis with other Cronobacter species.</title>
        <authorList>
            <person name="Kucerova E."/>
            <person name="Clifton S.W."/>
            <person name="Xia X.Q."/>
            <person name="Long F."/>
            <person name="Porwollik S."/>
            <person name="Fulton L."/>
            <person name="Fronick C."/>
            <person name="Minx P."/>
            <person name="Kyung K."/>
            <person name="Warren W."/>
            <person name="Fulton R."/>
            <person name="Feng D."/>
            <person name="Wollam A."/>
            <person name="Shah N."/>
            <person name="Bhonagiri V."/>
            <person name="Nash W.E."/>
            <person name="Hallsworth-Pepin K."/>
            <person name="Wilson R.K."/>
            <person name="McClelland M."/>
            <person name="Forsythe S.J."/>
        </authorList>
    </citation>
    <scope>NUCLEOTIDE SEQUENCE [LARGE SCALE GENOMIC DNA]</scope>
    <source>
        <strain>ATCC BAA-894</strain>
    </source>
</reference>
<organism>
    <name type="scientific">Cronobacter sakazakii (strain ATCC BAA-894)</name>
    <name type="common">Enterobacter sakazakii</name>
    <dbReference type="NCBI Taxonomy" id="290339"/>
    <lineage>
        <taxon>Bacteria</taxon>
        <taxon>Pseudomonadati</taxon>
        <taxon>Pseudomonadota</taxon>
        <taxon>Gammaproteobacteria</taxon>
        <taxon>Enterobacterales</taxon>
        <taxon>Enterobacteriaceae</taxon>
        <taxon>Cronobacter</taxon>
    </lineage>
</organism>
<dbReference type="EC" id="5.1.3.32" evidence="1"/>
<dbReference type="EMBL" id="CP000783">
    <property type="protein sequence ID" value="ABU79038.1"/>
    <property type="molecule type" value="Genomic_DNA"/>
</dbReference>
<dbReference type="RefSeq" id="WP_012126098.1">
    <property type="nucleotide sequence ID" value="NC_009778.1"/>
</dbReference>
<dbReference type="SMR" id="A7ML65"/>
<dbReference type="KEGG" id="esa:ESA_03852"/>
<dbReference type="PATRIC" id="fig|290339.8.peg.3424"/>
<dbReference type="HOGENOM" id="CLU_100689_2_0_6"/>
<dbReference type="UniPathway" id="UPA00125"/>
<dbReference type="Proteomes" id="UP000000260">
    <property type="component" value="Chromosome"/>
</dbReference>
<dbReference type="GO" id="GO:0005737">
    <property type="term" value="C:cytoplasm"/>
    <property type="evidence" value="ECO:0007669"/>
    <property type="project" value="UniProtKB-SubCell"/>
</dbReference>
<dbReference type="GO" id="GO:0062192">
    <property type="term" value="F:L-rhamnose mutarotase activity"/>
    <property type="evidence" value="ECO:0007669"/>
    <property type="project" value="UniProtKB-EC"/>
</dbReference>
<dbReference type="GO" id="GO:0019301">
    <property type="term" value="P:rhamnose catabolic process"/>
    <property type="evidence" value="ECO:0007669"/>
    <property type="project" value="TreeGrafter"/>
</dbReference>
<dbReference type="Gene3D" id="3.30.70.100">
    <property type="match status" value="1"/>
</dbReference>
<dbReference type="HAMAP" id="MF_01663">
    <property type="entry name" value="L_rham_rotase"/>
    <property type="match status" value="1"/>
</dbReference>
<dbReference type="InterPro" id="IPR011008">
    <property type="entry name" value="Dimeric_a/b-barrel"/>
</dbReference>
<dbReference type="InterPro" id="IPR013448">
    <property type="entry name" value="L-rhamnose_mutarotase"/>
</dbReference>
<dbReference type="InterPro" id="IPR008000">
    <property type="entry name" value="Rham/fucose_mutarotase"/>
</dbReference>
<dbReference type="NCBIfam" id="TIGR02625">
    <property type="entry name" value="YiiL_rotase"/>
    <property type="match status" value="1"/>
</dbReference>
<dbReference type="PANTHER" id="PTHR34389">
    <property type="entry name" value="L-RHAMNOSE MUTAROTASE"/>
    <property type="match status" value="1"/>
</dbReference>
<dbReference type="PANTHER" id="PTHR34389:SF2">
    <property type="entry name" value="L-RHAMNOSE MUTAROTASE"/>
    <property type="match status" value="1"/>
</dbReference>
<dbReference type="Pfam" id="PF05336">
    <property type="entry name" value="rhaM"/>
    <property type="match status" value="1"/>
</dbReference>
<dbReference type="SUPFAM" id="SSF54909">
    <property type="entry name" value="Dimeric alpha+beta barrel"/>
    <property type="match status" value="1"/>
</dbReference>
<evidence type="ECO:0000255" key="1">
    <source>
        <dbReference type="HAMAP-Rule" id="MF_01663"/>
    </source>
</evidence>
<feature type="chain" id="PRO_0000344565" description="L-rhamnose mutarotase">
    <location>
        <begin position="1"/>
        <end position="104"/>
    </location>
</feature>
<feature type="active site" description="Proton donor" evidence="1">
    <location>
        <position position="22"/>
    </location>
</feature>
<feature type="binding site" evidence="1">
    <location>
        <position position="18"/>
    </location>
    <ligand>
        <name>substrate</name>
    </ligand>
</feature>
<feature type="binding site" evidence="1">
    <location>
        <position position="41"/>
    </location>
    <ligand>
        <name>substrate</name>
    </ligand>
</feature>
<feature type="binding site" evidence="1">
    <location>
        <begin position="76"/>
        <end position="77"/>
    </location>
    <ligand>
        <name>substrate</name>
    </ligand>
</feature>
<proteinExistence type="inferred from homology"/>
<protein>
    <recommendedName>
        <fullName evidence="1">L-rhamnose mutarotase</fullName>
        <ecNumber evidence="1">5.1.3.32</ecNumber>
    </recommendedName>
    <alternativeName>
        <fullName evidence="1">Rhamnose 1-epimerase</fullName>
    </alternativeName>
    <alternativeName>
        <fullName evidence="1">Type-3 mutarotase</fullName>
    </alternativeName>
</protein>